<name>NAC_METTH</name>
<organism>
    <name type="scientific">Methanothermobacter thermautotrophicus (strain ATCC 29096 / DSM 1053 / JCM 10044 / NBRC 100330 / Delta H)</name>
    <name type="common">Methanobacterium thermoautotrophicum</name>
    <dbReference type="NCBI Taxonomy" id="187420"/>
    <lineage>
        <taxon>Archaea</taxon>
        <taxon>Methanobacteriati</taxon>
        <taxon>Methanobacteriota</taxon>
        <taxon>Methanomada group</taxon>
        <taxon>Methanobacteria</taxon>
        <taxon>Methanobacteriales</taxon>
        <taxon>Methanobacteriaceae</taxon>
        <taxon>Methanothermobacter</taxon>
    </lineage>
</organism>
<reference key="1">
    <citation type="journal article" date="1997" name="J. Bacteriol.">
        <title>Complete genome sequence of Methanobacterium thermoautotrophicum deltaH: functional analysis and comparative genomics.</title>
        <authorList>
            <person name="Smith D.R."/>
            <person name="Doucette-Stamm L.A."/>
            <person name="Deloughery C."/>
            <person name="Lee H.-M."/>
            <person name="Dubois J."/>
            <person name="Aldredge T."/>
            <person name="Bashirzadeh R."/>
            <person name="Blakely D."/>
            <person name="Cook R."/>
            <person name="Gilbert K."/>
            <person name="Harrison D."/>
            <person name="Hoang L."/>
            <person name="Keagle P."/>
            <person name="Lumm W."/>
            <person name="Pothier B."/>
            <person name="Qiu D."/>
            <person name="Spadafora R."/>
            <person name="Vicare R."/>
            <person name="Wang Y."/>
            <person name="Wierzbowski J."/>
            <person name="Gibson R."/>
            <person name="Jiwani N."/>
            <person name="Caruso A."/>
            <person name="Bush D."/>
            <person name="Safer H."/>
            <person name="Patwell D."/>
            <person name="Prabhakar S."/>
            <person name="McDougall S."/>
            <person name="Shimer G."/>
            <person name="Goyal A."/>
            <person name="Pietrovski S."/>
            <person name="Church G.M."/>
            <person name="Daniels C.J."/>
            <person name="Mao J.-I."/>
            <person name="Rice P."/>
            <person name="Noelling J."/>
            <person name="Reeve J.N."/>
        </authorList>
    </citation>
    <scope>NUCLEOTIDE SEQUENCE [LARGE SCALE GENOMIC DNA]</scope>
    <source>
        <strain>ATCC 29096 / DSM 1053 / JCM 10044 / NBRC 100330 / Delta H</strain>
    </source>
</reference>
<sequence length="117" mass="13286">MIPGMGMNPKQLKQMQRAMKQMGMDMKDLRGVEEVVIKLKRKEIIIKNPKVNVMEFMGQKTYQVTGKARERSLEAEMEIPEDDIELVMNQTGASREDATRALQETGGDLAEAIMRLS</sequence>
<dbReference type="EMBL" id="AE000666">
    <property type="protein sequence ID" value="AAB84683.1"/>
    <property type="molecule type" value="Genomic_DNA"/>
</dbReference>
<dbReference type="PIR" id="C69103">
    <property type="entry name" value="C69103"/>
</dbReference>
<dbReference type="RefSeq" id="WP_010875816.1">
    <property type="nucleotide sequence ID" value="NC_000916.1"/>
</dbReference>
<dbReference type="SMR" id="O26279"/>
<dbReference type="FunCoup" id="O26279">
    <property type="interactions" value="69"/>
</dbReference>
<dbReference type="STRING" id="187420.MTH_177"/>
<dbReference type="PaxDb" id="187420-MTH_177"/>
<dbReference type="EnsemblBacteria" id="AAB84683">
    <property type="protein sequence ID" value="AAB84683"/>
    <property type="gene ID" value="MTH_177"/>
</dbReference>
<dbReference type="KEGG" id="mth:MTH_177"/>
<dbReference type="PATRIC" id="fig|187420.15.peg.150"/>
<dbReference type="HOGENOM" id="CLU_146475_0_0_2"/>
<dbReference type="InParanoid" id="O26279"/>
<dbReference type="Proteomes" id="UP000005223">
    <property type="component" value="Chromosome"/>
</dbReference>
<dbReference type="GO" id="GO:0003723">
    <property type="term" value="F:RNA binding"/>
    <property type="evidence" value="ECO:0007669"/>
    <property type="project" value="UniProtKB-UniRule"/>
</dbReference>
<dbReference type="GO" id="GO:0015031">
    <property type="term" value="P:protein transport"/>
    <property type="evidence" value="ECO:0007669"/>
    <property type="project" value="UniProtKB-UniRule"/>
</dbReference>
<dbReference type="CDD" id="cd22054">
    <property type="entry name" value="NAC_NACA"/>
    <property type="match status" value="1"/>
</dbReference>
<dbReference type="CDD" id="cd14359">
    <property type="entry name" value="UBA_AeNAC"/>
    <property type="match status" value="1"/>
</dbReference>
<dbReference type="Gene3D" id="1.10.8.10">
    <property type="entry name" value="DNA helicase RuvA subunit, C-terminal domain"/>
    <property type="match status" value="1"/>
</dbReference>
<dbReference type="Gene3D" id="2.20.70.30">
    <property type="entry name" value="Nascent polypeptide-associated complex domain"/>
    <property type="match status" value="1"/>
</dbReference>
<dbReference type="HAMAP" id="MF_00814">
    <property type="entry name" value="NAC_arch"/>
    <property type="match status" value="1"/>
</dbReference>
<dbReference type="InterPro" id="IPR044034">
    <property type="entry name" value="NAC-like_UBA"/>
</dbReference>
<dbReference type="InterPro" id="IPR038187">
    <property type="entry name" value="NAC_A/B_dom_sf"/>
</dbReference>
<dbReference type="InterPro" id="IPR005231">
    <property type="entry name" value="NAC_arc"/>
</dbReference>
<dbReference type="InterPro" id="IPR002715">
    <property type="entry name" value="Nas_poly-pep-assoc_cplx_dom"/>
</dbReference>
<dbReference type="InterPro" id="IPR009060">
    <property type="entry name" value="UBA-like_sf"/>
</dbReference>
<dbReference type="NCBIfam" id="TIGR00264">
    <property type="entry name" value="archaeal-type nascent polypeptide-associated complex protein"/>
    <property type="match status" value="1"/>
</dbReference>
<dbReference type="Pfam" id="PF01849">
    <property type="entry name" value="NAC"/>
    <property type="match status" value="1"/>
</dbReference>
<dbReference type="Pfam" id="PF19026">
    <property type="entry name" value="UBA_HYPK"/>
    <property type="match status" value="1"/>
</dbReference>
<dbReference type="SMART" id="SM01407">
    <property type="entry name" value="NAC"/>
    <property type="match status" value="1"/>
</dbReference>
<dbReference type="SUPFAM" id="SSF46934">
    <property type="entry name" value="UBA-like"/>
    <property type="match status" value="1"/>
</dbReference>
<dbReference type="PROSITE" id="PS51151">
    <property type="entry name" value="NAC_AB"/>
    <property type="match status" value="1"/>
</dbReference>
<protein>
    <recommendedName>
        <fullName evidence="1">Nascent polypeptide-associated complex protein</fullName>
    </recommendedName>
</protein>
<evidence type="ECO:0000255" key="1">
    <source>
        <dbReference type="HAMAP-Rule" id="MF_00814"/>
    </source>
</evidence>
<proteinExistence type="inferred from homology"/>
<keyword id="KW-0653">Protein transport</keyword>
<keyword id="KW-1185">Reference proteome</keyword>
<keyword id="KW-0694">RNA-binding</keyword>
<keyword id="KW-0813">Transport</keyword>
<gene>
    <name evidence="1" type="primary">nac</name>
    <name type="ordered locus">MTH_177</name>
</gene>
<comment type="function">
    <text evidence="1">Contacts the emerging nascent chain on the ribosome.</text>
</comment>
<comment type="subunit">
    <text evidence="1">Homodimer. Interacts with the ribosome. Binds ribosomal RNA.</text>
</comment>
<comment type="similarity">
    <text evidence="1">Belongs to the NAC-alpha family.</text>
</comment>
<feature type="chain" id="PRO_0000135599" description="Nascent polypeptide-associated complex protein">
    <location>
        <begin position="1"/>
        <end position="117"/>
    </location>
</feature>
<feature type="domain" description="NAC-A/B" evidence="1">
    <location>
        <begin position="9"/>
        <end position="77"/>
    </location>
</feature>
<accession>O26279</accession>